<sequence length="230" mass="23190">MARAAVRAGAKVALIDRDGACAEKAAAEIGAAAWGVGADVTDEAAIAAAMAGAERALGPLTGLVNNAGIAGFGSVHTTEVETWGRIMAVNVTGTFLASKAALSGMLERRRGAIVNFGSVAGLVGIPSMAAYCAAKGAVVSLTRQMAAEYSGQGIRVNVVCPGTVASTDMGRQLLGQDADPELEARRLAKYPIGRFGTPEDIAEAAIFLLSTKAAFVTGCVFAVDGGMTAI</sequence>
<keyword id="KW-0614">Plasmid</keyword>
<keyword id="KW-1185">Reference proteome</keyword>
<accession>A7IQF2</accession>
<evidence type="ECO:0000269" key="1">
    <source>
    </source>
</evidence>
<evidence type="ECO:0000303" key="2">
    <source>
    </source>
</evidence>
<evidence type="ECO:0000305" key="3"/>
<evidence type="ECO:0000312" key="4">
    <source>
        <dbReference type="EMBL" id="ABS70248.1"/>
    </source>
</evidence>
<dbReference type="EMBL" id="CP000782">
    <property type="protein sequence ID" value="ABS70248.1"/>
    <property type="molecule type" value="Genomic_DNA"/>
</dbReference>
<dbReference type="SMR" id="A7IQF2"/>
<dbReference type="KEGG" id="xau:Xaut_5050"/>
<dbReference type="eggNOG" id="COG1028">
    <property type="taxonomic scope" value="Bacteria"/>
</dbReference>
<dbReference type="HOGENOM" id="CLU_010194_1_0_5"/>
<dbReference type="PhylomeDB" id="A7IQF2"/>
<dbReference type="Proteomes" id="UP000002417">
    <property type="component" value="Plasmid pXAUT01"/>
</dbReference>
<dbReference type="GO" id="GO:0016616">
    <property type="term" value="F:oxidoreductase activity, acting on the CH-OH group of donors, NAD or NADP as acceptor"/>
    <property type="evidence" value="ECO:0007669"/>
    <property type="project" value="TreeGrafter"/>
</dbReference>
<dbReference type="GO" id="GO:0030497">
    <property type="term" value="P:fatty acid elongation"/>
    <property type="evidence" value="ECO:0007669"/>
    <property type="project" value="TreeGrafter"/>
</dbReference>
<dbReference type="CDD" id="cd05233">
    <property type="entry name" value="SDR_c"/>
    <property type="match status" value="1"/>
</dbReference>
<dbReference type="FunFam" id="3.40.50.720:FF:000084">
    <property type="entry name" value="Short-chain dehydrogenase reductase"/>
    <property type="match status" value="1"/>
</dbReference>
<dbReference type="Gene3D" id="3.40.50.720">
    <property type="entry name" value="NAD(P)-binding Rossmann-like Domain"/>
    <property type="match status" value="1"/>
</dbReference>
<dbReference type="InterPro" id="IPR036291">
    <property type="entry name" value="NAD(P)-bd_dom_sf"/>
</dbReference>
<dbReference type="InterPro" id="IPR020904">
    <property type="entry name" value="Sc_DH/Rdtase_CS"/>
</dbReference>
<dbReference type="InterPro" id="IPR002347">
    <property type="entry name" value="SDR_fam"/>
</dbReference>
<dbReference type="PANTHER" id="PTHR42760:SF40">
    <property type="entry name" value="3-OXOACYL-[ACYL-CARRIER-PROTEIN] REDUCTASE, CHLOROPLASTIC"/>
    <property type="match status" value="1"/>
</dbReference>
<dbReference type="PANTHER" id="PTHR42760">
    <property type="entry name" value="SHORT-CHAIN DEHYDROGENASES/REDUCTASES FAMILY MEMBER"/>
    <property type="match status" value="1"/>
</dbReference>
<dbReference type="Pfam" id="PF13561">
    <property type="entry name" value="adh_short_C2"/>
    <property type="match status" value="1"/>
</dbReference>
<dbReference type="PRINTS" id="PR00081">
    <property type="entry name" value="GDHRDH"/>
</dbReference>
<dbReference type="PRINTS" id="PR00080">
    <property type="entry name" value="SDRFAMILY"/>
</dbReference>
<dbReference type="SUPFAM" id="SSF51735">
    <property type="entry name" value="NAD(P)-binding Rossmann-fold domains"/>
    <property type="match status" value="1"/>
</dbReference>
<dbReference type="PROSITE" id="PS00061">
    <property type="entry name" value="ADH_SHORT"/>
    <property type="match status" value="1"/>
</dbReference>
<feature type="chain" id="PRO_0000454345" description="Inactive 2-(S)-hydroxypropyl-CoM dehydrogenase 2">
    <location>
        <begin position="1"/>
        <end position="230"/>
    </location>
</feature>
<organism>
    <name type="scientific">Xanthobacter autotrophicus (strain ATCC BAA-1158 / Py2)</name>
    <dbReference type="NCBI Taxonomy" id="78245"/>
    <lineage>
        <taxon>Bacteria</taxon>
        <taxon>Pseudomonadati</taxon>
        <taxon>Pseudomonadota</taxon>
        <taxon>Alphaproteobacteria</taxon>
        <taxon>Hyphomicrobiales</taxon>
        <taxon>Xanthobacteraceae</taxon>
        <taxon>Xanthobacter</taxon>
    </lineage>
</organism>
<gene>
    <name evidence="2" type="primary">xecE2</name>
    <name evidence="4" type="ordered locus">Xaut_5050</name>
</gene>
<protein>
    <recommendedName>
        <fullName evidence="3">Inactive 2-(S)-hydroxypropyl-CoM dehydrogenase 2</fullName>
    </recommendedName>
    <alternativeName>
        <fullName evidence="2">SHPCDH2</fullName>
    </alternativeName>
</protein>
<proteinExistence type="inferred from homology"/>
<name>HCDS2_XANP2</name>
<comment type="similarity">
    <text evidence="3">Belongs to the short-chain dehydrogenases/reductases (SDR) family.</text>
</comment>
<comment type="caution">
    <text evidence="1">Lacks 2-(S)-hydroxypropyl-CoM dehydrogenase activity. Contains apparent mutations in the N-terminal region, including the lack of key NAD(+)-binding residues, which may explain the lack of activity.</text>
</comment>
<reference key="1">
    <citation type="submission" date="2007-07" db="EMBL/GenBank/DDBJ databases">
        <title>Complete sequence of plasmid pXAUT01 of Xanthobacter autotrophicus Py2.</title>
        <authorList>
            <consortium name="US DOE Joint Genome Institute"/>
            <person name="Copeland A."/>
            <person name="Lucas S."/>
            <person name="Lapidus A."/>
            <person name="Barry K."/>
            <person name="Glavina del Rio T."/>
            <person name="Hammon N."/>
            <person name="Israni S."/>
            <person name="Dalin E."/>
            <person name="Tice H."/>
            <person name="Pitluck S."/>
            <person name="Sims D."/>
            <person name="Brettin T."/>
            <person name="Bruce D."/>
            <person name="Detter J.C."/>
            <person name="Han C."/>
            <person name="Tapia R."/>
            <person name="Brainard J."/>
            <person name="Schmutz J."/>
            <person name="Larimer F."/>
            <person name="Land M."/>
            <person name="Hauser L."/>
            <person name="Kyrpides N."/>
            <person name="Kim E."/>
            <person name="Ensigns S.A."/>
            <person name="Richardson P."/>
        </authorList>
    </citation>
    <scope>NUCLEOTIDE SEQUENCE [LARGE SCALE GENOMIC DNA]</scope>
    <source>
        <strain>ATCC BAA-1158 / Py2</strain>
    </source>
</reference>
<reference key="2">
    <citation type="journal article" date="2010" name="Biochemistry">
        <title>Molecular basis for enantioselectivity in the (R)- and (S)-hydroxypropylthioethanesulfonate dehydrogenases, a unique pair of stereoselective short-chain dehydrogenases/reductases involved in aliphatic epoxide carboxylation.</title>
        <authorList>
            <person name="Sliwa D.A."/>
            <person name="Krishnakumar A.M."/>
            <person name="Peters J.W."/>
            <person name="Ensign S.A."/>
        </authorList>
    </citation>
    <scope>LACK OF ACTIVITY</scope>
    <source>
        <strain>ATCC BAA-1158 / Py2</strain>
    </source>
</reference>
<geneLocation type="plasmid">
    <name>pXAUT01</name>
</geneLocation>